<protein>
    <recommendedName>
        <fullName>Elongation factor Ts 2, mitochondrial</fullName>
        <shortName evidence="1">EF-Ts 2</shortName>
        <shortName evidence="1">EF-TsMt 2</shortName>
    </recommendedName>
</protein>
<accession>B8CAZ5</accession>
<name>EFTS2_THAPS</name>
<dbReference type="EMBL" id="CM000648">
    <property type="protein sequence ID" value="EED89227.1"/>
    <property type="status" value="ALT_INIT"/>
    <property type="molecule type" value="Genomic_DNA"/>
</dbReference>
<dbReference type="RefSeq" id="XP_002293491.1">
    <property type="nucleotide sequence ID" value="XM_002293455.1"/>
</dbReference>
<dbReference type="SMR" id="B8CAZ5"/>
<dbReference type="FunCoup" id="B8CAZ5">
    <property type="interactions" value="250"/>
</dbReference>
<dbReference type="STRING" id="35128.B8CAZ5"/>
<dbReference type="PaxDb" id="35128-Thaps9318"/>
<dbReference type="EnsemblProtists" id="EED89227">
    <property type="protein sequence ID" value="EED89227"/>
    <property type="gene ID" value="THAPSDRAFT_9318"/>
</dbReference>
<dbReference type="GeneID" id="7452970"/>
<dbReference type="KEGG" id="tps:THAPSDRAFT_9318"/>
<dbReference type="eggNOG" id="KOG1071">
    <property type="taxonomic scope" value="Eukaryota"/>
</dbReference>
<dbReference type="InParanoid" id="B8CAZ5"/>
<dbReference type="Proteomes" id="UP000001449">
    <property type="component" value="Chromosome 13"/>
</dbReference>
<dbReference type="GO" id="GO:0005739">
    <property type="term" value="C:mitochondrion"/>
    <property type="evidence" value="ECO:0007669"/>
    <property type="project" value="UniProtKB-SubCell"/>
</dbReference>
<dbReference type="GO" id="GO:0003746">
    <property type="term" value="F:translation elongation factor activity"/>
    <property type="evidence" value="ECO:0000318"/>
    <property type="project" value="GO_Central"/>
</dbReference>
<dbReference type="GO" id="GO:0070125">
    <property type="term" value="P:mitochondrial translational elongation"/>
    <property type="evidence" value="ECO:0000318"/>
    <property type="project" value="GO_Central"/>
</dbReference>
<dbReference type="CDD" id="cd14275">
    <property type="entry name" value="UBA_EF-Ts"/>
    <property type="match status" value="1"/>
</dbReference>
<dbReference type="FunFam" id="1.10.286.20:FF:000001">
    <property type="entry name" value="Elongation factor Ts"/>
    <property type="match status" value="1"/>
</dbReference>
<dbReference type="FunFam" id="1.10.8.10:FF:000001">
    <property type="entry name" value="Elongation factor Ts"/>
    <property type="match status" value="1"/>
</dbReference>
<dbReference type="Gene3D" id="1.10.286.20">
    <property type="match status" value="1"/>
</dbReference>
<dbReference type="Gene3D" id="1.10.8.10">
    <property type="entry name" value="DNA helicase RuvA subunit, C-terminal domain"/>
    <property type="match status" value="1"/>
</dbReference>
<dbReference type="Gene3D" id="3.30.479.20">
    <property type="entry name" value="Elongation factor Ts, dimerisation domain"/>
    <property type="match status" value="2"/>
</dbReference>
<dbReference type="HAMAP" id="MF_00050">
    <property type="entry name" value="EF_Ts"/>
    <property type="match status" value="1"/>
</dbReference>
<dbReference type="InterPro" id="IPR036402">
    <property type="entry name" value="EF-Ts_dimer_sf"/>
</dbReference>
<dbReference type="InterPro" id="IPR001816">
    <property type="entry name" value="Transl_elong_EFTs/EF1B"/>
</dbReference>
<dbReference type="InterPro" id="IPR014039">
    <property type="entry name" value="Transl_elong_EFTs/EF1B_dimer"/>
</dbReference>
<dbReference type="InterPro" id="IPR009060">
    <property type="entry name" value="UBA-like_sf"/>
</dbReference>
<dbReference type="NCBIfam" id="TIGR00116">
    <property type="entry name" value="tsf"/>
    <property type="match status" value="1"/>
</dbReference>
<dbReference type="PANTHER" id="PTHR11741">
    <property type="entry name" value="ELONGATION FACTOR TS"/>
    <property type="match status" value="1"/>
</dbReference>
<dbReference type="PANTHER" id="PTHR11741:SF0">
    <property type="entry name" value="ELONGATION FACTOR TS, MITOCHONDRIAL"/>
    <property type="match status" value="1"/>
</dbReference>
<dbReference type="Pfam" id="PF00889">
    <property type="entry name" value="EF_TS"/>
    <property type="match status" value="1"/>
</dbReference>
<dbReference type="SUPFAM" id="SSF54713">
    <property type="entry name" value="Elongation factor Ts (EF-Ts), dimerisation domain"/>
    <property type="match status" value="1"/>
</dbReference>
<dbReference type="SUPFAM" id="SSF46934">
    <property type="entry name" value="UBA-like"/>
    <property type="match status" value="1"/>
</dbReference>
<organism>
    <name type="scientific">Thalassiosira pseudonana</name>
    <name type="common">Marine diatom</name>
    <name type="synonym">Cyclotella nana</name>
    <dbReference type="NCBI Taxonomy" id="35128"/>
    <lineage>
        <taxon>Eukaryota</taxon>
        <taxon>Sar</taxon>
        <taxon>Stramenopiles</taxon>
        <taxon>Ochrophyta</taxon>
        <taxon>Bacillariophyta</taxon>
        <taxon>Coscinodiscophyceae</taxon>
        <taxon>Thalassiosirophycidae</taxon>
        <taxon>Thalassiosirales</taxon>
        <taxon>Thalassiosiraceae</taxon>
        <taxon>Thalassiosira</taxon>
    </lineage>
</organism>
<evidence type="ECO:0000255" key="1">
    <source>
        <dbReference type="HAMAP-Rule" id="MF_03135"/>
    </source>
</evidence>
<evidence type="ECO:0000256" key="2">
    <source>
        <dbReference type="SAM" id="MobiDB-lite"/>
    </source>
</evidence>
<evidence type="ECO:0000305" key="3"/>
<comment type="function">
    <text evidence="1">Associates with the EF-Tu.GDP complex and induces the exchange of GDP to GTP. It remains bound to the aminoacyl-tRNA.EF-Tu.GTP complex up to the GTP hydrolysis stage on the ribosome.</text>
</comment>
<comment type="subcellular location">
    <subcellularLocation>
        <location evidence="1">Mitochondrion</location>
    </subcellularLocation>
</comment>
<comment type="similarity">
    <text evidence="1">Belongs to the EF-Ts family.</text>
</comment>
<comment type="sequence caution" evidence="3">
    <conflict type="erroneous initiation">
        <sequence resource="EMBL-CDS" id="EED89227"/>
    </conflict>
    <text>Extended N-terminus.</text>
</comment>
<proteinExistence type="inferred from homology"/>
<gene>
    <name type="ORF">THAPSDRAFT_9318</name>
</gene>
<reference key="1">
    <citation type="journal article" date="2004" name="Science">
        <title>The genome of the diatom Thalassiosira pseudonana: ecology, evolution, and metabolism.</title>
        <authorList>
            <person name="Armbrust E.V."/>
            <person name="Berges J.A."/>
            <person name="Bowler C."/>
            <person name="Green B.R."/>
            <person name="Martinez D."/>
            <person name="Putnam N.H."/>
            <person name="Zhou S."/>
            <person name="Allen A.E."/>
            <person name="Apt K.E."/>
            <person name="Bechner M."/>
            <person name="Brzezinski M.A."/>
            <person name="Chaal B.K."/>
            <person name="Chiovitti A."/>
            <person name="Davis A.K."/>
            <person name="Demarest M.S."/>
            <person name="Detter J.C."/>
            <person name="Glavina T."/>
            <person name="Goodstein D."/>
            <person name="Hadi M.Z."/>
            <person name="Hellsten U."/>
            <person name="Hildebrand M."/>
            <person name="Jenkins B.D."/>
            <person name="Jurka J."/>
            <person name="Kapitonov V.V."/>
            <person name="Kroger N."/>
            <person name="Lau W.W."/>
            <person name="Lane T.W."/>
            <person name="Larimer F.W."/>
            <person name="Lippmeier J.C."/>
            <person name="Lucas S."/>
            <person name="Medina M."/>
            <person name="Montsant A."/>
            <person name="Obornik M."/>
            <person name="Parker M.S."/>
            <person name="Palenik B."/>
            <person name="Pazour G.J."/>
            <person name="Richardson P.M."/>
            <person name="Rynearson T.A."/>
            <person name="Saito M.A."/>
            <person name="Schwartz D.C."/>
            <person name="Thamatrakoln K."/>
            <person name="Valentin K."/>
            <person name="Vardi A."/>
            <person name="Wilkerson F.P."/>
            <person name="Rokhsar D.S."/>
        </authorList>
    </citation>
    <scope>NUCLEOTIDE SEQUENCE [LARGE SCALE GENOMIC DNA]</scope>
    <source>
        <strain>CCMP1335 / NEPCC58 / CCAP 1085/12</strain>
    </source>
</reference>
<reference key="2">
    <citation type="submission" date="2008-09" db="EMBL/GenBank/DDBJ databases">
        <authorList>
            <consortium name="Diatom Consortium"/>
            <person name="Grigoriev I."/>
            <person name="Grimwood J."/>
            <person name="Kuo A."/>
            <person name="Otillar R.P."/>
            <person name="Salamov A."/>
            <person name="Detter J.C."/>
            <person name="Schmutz J."/>
            <person name="Lindquist E."/>
            <person name="Shapiro H."/>
            <person name="Lucas S."/>
            <person name="Glavina del Rio T."/>
            <person name="Bruce D."/>
            <person name="Pitluck S."/>
            <person name="Rokhsar D."/>
            <person name="Armbrust V."/>
        </authorList>
    </citation>
    <scope>GENOME REANNOTATION</scope>
    <source>
        <strain>CCMP1335 / NEPCC58 / CCAP 1085/12</strain>
    </source>
</reference>
<keyword id="KW-0251">Elongation factor</keyword>
<keyword id="KW-0496">Mitochondrion</keyword>
<keyword id="KW-0648">Protein biosynthesis</keyword>
<keyword id="KW-1185">Reference proteome</keyword>
<keyword id="KW-0809">Transit peptide</keyword>
<sequence>MMIFSTAVLRLCATSRIGAVTKRASSTFLSSASSSSSSSSPTQSMPPQRYTHHQFQRHSYSTTTTTLQQQQQPSPPLSTAQLVKQLRLLTGAPMLECKKALASPDVNNDLALAQEWLRKHSSQKIGSKVAGREALEGLVGVCIDNCDGGSRGVLVKVASETDFASRSEVFTGLVQEIADAAAAAAGDGGDIVDIPTFLSNTQSITTGKLLSECLNDAVLSIRENIQLDSIVTIGTTPSSRSVIAGYVHGRAPNSTCGTSAALVEVEVLPKDGGGGDDAVLSEEEKSVAMEAAKKLAMHVVASNPLYLNPESVPVDVVEKEREILMEKMTDSNKPPEIIEKIISGQLRKFYEGICLTEQSHLVEEGNPKISKVMKGLGLVVKDFRLVGMSK</sequence>
<feature type="transit peptide" description="Mitochondrion" evidence="1">
    <location>
        <begin position="1"/>
        <end position="24"/>
    </location>
</feature>
<feature type="chain" id="PRO_0000402342" description="Elongation factor Ts 2, mitochondrial">
    <location>
        <begin position="25"/>
        <end position="390"/>
    </location>
</feature>
<feature type="region of interest" description="Disordered" evidence="2">
    <location>
        <begin position="30"/>
        <end position="54"/>
    </location>
</feature>
<feature type="compositionally biased region" description="Low complexity" evidence="2">
    <location>
        <begin position="30"/>
        <end position="40"/>
    </location>
</feature>